<name>SIR2_MYCPA</name>
<comment type="function">
    <text evidence="2">Catalyzes the reduction of sulfite to sulfide, a step in the biosynthesis of sulfur-containing amino acids and cofactors.</text>
</comment>
<comment type="catalytic activity">
    <reaction evidence="2">
        <text>hydrogen sulfide + 6 oxidized [2Fe-2S]-[ferredoxin] + 3 H2O = sulfite + 6 reduced [2Fe-2S]-[ferredoxin] + 7 H(+)</text>
        <dbReference type="Rhea" id="RHEA:23132"/>
        <dbReference type="Rhea" id="RHEA-COMP:10000"/>
        <dbReference type="Rhea" id="RHEA-COMP:10001"/>
        <dbReference type="ChEBI" id="CHEBI:15377"/>
        <dbReference type="ChEBI" id="CHEBI:15378"/>
        <dbReference type="ChEBI" id="CHEBI:17359"/>
        <dbReference type="ChEBI" id="CHEBI:29919"/>
        <dbReference type="ChEBI" id="CHEBI:33737"/>
        <dbReference type="ChEBI" id="CHEBI:33738"/>
        <dbReference type="EC" id="1.8.7.1"/>
    </reaction>
</comment>
<comment type="cofactor">
    <cofactor evidence="1">
        <name>siroheme</name>
        <dbReference type="ChEBI" id="CHEBI:60052"/>
    </cofactor>
    <text evidence="1">Binds 1 siroheme per subunit.</text>
</comment>
<comment type="cofactor">
    <cofactor evidence="1">
        <name>[4Fe-4S] cluster</name>
        <dbReference type="ChEBI" id="CHEBI:49883"/>
    </cofactor>
    <text evidence="1">Binds 1 [4Fe-4S] cluster per subunit.</text>
</comment>
<comment type="subunit">
    <text evidence="1">Monomer.</text>
</comment>
<comment type="similarity">
    <text evidence="4">Belongs to the nitrite and sulfite reductase 4Fe-4S domain family.</text>
</comment>
<evidence type="ECO:0000250" key="1"/>
<evidence type="ECO:0000250" key="2">
    <source>
        <dbReference type="UniProtKB" id="P9WJ03"/>
    </source>
</evidence>
<evidence type="ECO:0000256" key="3">
    <source>
        <dbReference type="SAM" id="MobiDB-lite"/>
    </source>
</evidence>
<evidence type="ECO:0000305" key="4"/>
<organism>
    <name type="scientific">Mycolicibacterium paratuberculosis (strain ATCC BAA-968 / K-10)</name>
    <name type="common">Mycobacterium paratuberculosis</name>
    <dbReference type="NCBI Taxonomy" id="262316"/>
    <lineage>
        <taxon>Bacteria</taxon>
        <taxon>Bacillati</taxon>
        <taxon>Actinomycetota</taxon>
        <taxon>Actinomycetes</taxon>
        <taxon>Mycobacteriales</taxon>
        <taxon>Mycobacteriaceae</taxon>
        <taxon>Mycobacterium</taxon>
        <taxon>Mycobacterium avium complex (MAC)</taxon>
    </lineage>
</organism>
<feature type="chain" id="PRO_0000199951" description="Sulfite reductase [ferredoxin] 2">
    <location>
        <begin position="1"/>
        <end position="555"/>
    </location>
</feature>
<feature type="region of interest" description="Disordered" evidence="3">
    <location>
        <begin position="1"/>
        <end position="31"/>
    </location>
</feature>
<feature type="binding site" evidence="1">
    <location>
        <position position="417"/>
    </location>
    <ligand>
        <name>[4Fe-4S] cluster</name>
        <dbReference type="ChEBI" id="CHEBI:49883"/>
    </ligand>
</feature>
<feature type="binding site" evidence="1">
    <location>
        <position position="423"/>
    </location>
    <ligand>
        <name>[4Fe-4S] cluster</name>
        <dbReference type="ChEBI" id="CHEBI:49883"/>
    </ligand>
</feature>
<feature type="binding site" evidence="1">
    <location>
        <position position="463"/>
    </location>
    <ligand>
        <name>[4Fe-4S] cluster</name>
        <dbReference type="ChEBI" id="CHEBI:49883"/>
    </ligand>
</feature>
<feature type="binding site" evidence="1">
    <location>
        <position position="467"/>
    </location>
    <ligand>
        <name>[4Fe-4S] cluster</name>
        <dbReference type="ChEBI" id="CHEBI:49883"/>
    </ligand>
</feature>
<feature type="binding site" description="axial binding residue" evidence="1">
    <location>
        <position position="467"/>
    </location>
    <ligand>
        <name>siroheme</name>
        <dbReference type="ChEBI" id="CHEBI:60052"/>
    </ligand>
    <ligandPart>
        <name>Fe</name>
        <dbReference type="ChEBI" id="CHEBI:18248"/>
    </ligandPart>
</feature>
<feature type="cross-link" description="3'-(S-cysteinyl)-tyrosine (Tyr-Cys)" evidence="1">
    <location>
        <begin position="69"/>
        <end position="161"/>
    </location>
</feature>
<accession>Q73XV0</accession>
<protein>
    <recommendedName>
        <fullName>Sulfite reductase [ferredoxin] 2</fullName>
        <ecNumber>1.8.7.1</ecNumber>
    </recommendedName>
</protein>
<sequence length="555" mass="61868">MTTARPAKARNEGQWALGNREPLNPNEEMKQAGAPLAVRERIETIYAKNGFDSIDKSDLRGRFRWWGLYTQREQGYDGSWTGDENIEKLEARYFMMRVRCDGGAISAAALRTLGQISVDFARDTADITDRENIQYHWIEVENVPEIWRRLDAVGLRTTEACGDCPRVILGSPLAGESLEEVIDPSWAIAEIARRYIGQPDFADLPRKYKTAISGLQDVAHEVNDVAFIGVNHPEHGPGLDLWVGGGLSTNPMLAQRVGAWVPLHEVPEVWAAVTSVFRDYGYRRLRSKARLKFLVKDWGIEKFREVLETEYLKRPLIDGPAPEPVAHPIDHVGVQRLKNGLNAVGVAPIAGRVSGTILLAVADLAQQAGCDRIRFTPYQKLVLLDIPDDKLDEVVAGLEALGLQSQPSHWRRNLMACSGIEFCKLSFAETRVRAQGLVPELERRLADVNRQLDVPITINLNGCPNSCARIQVADIGLKGQMVDDGEGGSVEGFQVHLGGSLGQDSGFGRKLRQHKVTSDELGDYIERVARNFVKYRGEGERFAQWAMRADEDDLR</sequence>
<keyword id="KW-0004">4Fe-4S</keyword>
<keyword id="KW-0349">Heme</keyword>
<keyword id="KW-0408">Iron</keyword>
<keyword id="KW-0411">Iron-sulfur</keyword>
<keyword id="KW-0479">Metal-binding</keyword>
<keyword id="KW-0560">Oxidoreductase</keyword>
<keyword id="KW-1185">Reference proteome</keyword>
<keyword id="KW-0883">Thioether bond</keyword>
<gene>
    <name type="primary">sir2</name>
    <name type="synonym">nirA2</name>
    <name type="ordered locus">MAP_2208</name>
</gene>
<proteinExistence type="inferred from homology"/>
<reference key="1">
    <citation type="journal article" date="2005" name="Proc. Natl. Acad. Sci. U.S.A.">
        <title>The complete genome sequence of Mycobacterium avium subspecies paratuberculosis.</title>
        <authorList>
            <person name="Li L."/>
            <person name="Bannantine J.P."/>
            <person name="Zhang Q."/>
            <person name="Amonsin A."/>
            <person name="May B.J."/>
            <person name="Alt D."/>
            <person name="Banerji N."/>
            <person name="Kanjilal S."/>
            <person name="Kapur V."/>
        </authorList>
    </citation>
    <scope>NUCLEOTIDE SEQUENCE [LARGE SCALE GENOMIC DNA]</scope>
    <source>
        <strain>ATCC BAA-968 / K-10</strain>
    </source>
</reference>
<dbReference type="EC" id="1.8.7.1"/>
<dbReference type="EMBL" id="AE016958">
    <property type="protein sequence ID" value="AAS04525.1"/>
    <property type="molecule type" value="Genomic_DNA"/>
</dbReference>
<dbReference type="RefSeq" id="WP_003878378.1">
    <property type="nucleotide sequence ID" value="NZ_CP106873.1"/>
</dbReference>
<dbReference type="SMR" id="Q73XV0"/>
<dbReference type="STRING" id="262316.MAP_2208"/>
<dbReference type="KEGG" id="mpa:MAP_2208"/>
<dbReference type="PATRIC" id="fig|262316.17.peg.2348"/>
<dbReference type="eggNOG" id="COG0155">
    <property type="taxonomic scope" value="Bacteria"/>
</dbReference>
<dbReference type="HOGENOM" id="CLU_015667_2_3_11"/>
<dbReference type="Proteomes" id="UP000000580">
    <property type="component" value="Chromosome"/>
</dbReference>
<dbReference type="GO" id="GO:0051539">
    <property type="term" value="F:4 iron, 4 sulfur cluster binding"/>
    <property type="evidence" value="ECO:0007669"/>
    <property type="project" value="UniProtKB-KW"/>
</dbReference>
<dbReference type="GO" id="GO:0020037">
    <property type="term" value="F:heme binding"/>
    <property type="evidence" value="ECO:0007669"/>
    <property type="project" value="InterPro"/>
</dbReference>
<dbReference type="GO" id="GO:0046872">
    <property type="term" value="F:metal ion binding"/>
    <property type="evidence" value="ECO:0007669"/>
    <property type="project" value="UniProtKB-KW"/>
</dbReference>
<dbReference type="GO" id="GO:0050311">
    <property type="term" value="F:sulfite reductase (ferredoxin) activity"/>
    <property type="evidence" value="ECO:0007669"/>
    <property type="project" value="UniProtKB-EC"/>
</dbReference>
<dbReference type="FunFam" id="3.30.413.10:FF:000009">
    <property type="entry name" value="Sulfite reductase [ferredoxin]"/>
    <property type="match status" value="1"/>
</dbReference>
<dbReference type="FunFam" id="3.30.413.10:FF:000013">
    <property type="entry name" value="Sulfite reductase [ferredoxin]"/>
    <property type="match status" value="1"/>
</dbReference>
<dbReference type="Gene3D" id="3.90.480.20">
    <property type="match status" value="1"/>
</dbReference>
<dbReference type="Gene3D" id="3.30.413.10">
    <property type="entry name" value="Sulfite Reductase Hemoprotein, domain 1"/>
    <property type="match status" value="2"/>
</dbReference>
<dbReference type="InterPro" id="IPR051329">
    <property type="entry name" value="NIR_SIR_4Fe-4S"/>
</dbReference>
<dbReference type="InterPro" id="IPR005117">
    <property type="entry name" value="NiRdtase/SiRdtase_haem-b_fer"/>
</dbReference>
<dbReference type="InterPro" id="IPR036136">
    <property type="entry name" value="Nit/Sulf_reduc_fer-like_dom_sf"/>
</dbReference>
<dbReference type="InterPro" id="IPR006067">
    <property type="entry name" value="NO2/SO3_Rdtase_4Fe4S_dom"/>
</dbReference>
<dbReference type="InterPro" id="IPR045854">
    <property type="entry name" value="NO2/SO3_Rdtase_4Fe4S_sf"/>
</dbReference>
<dbReference type="InterPro" id="IPR006066">
    <property type="entry name" value="NO2/SO3_Rdtase_FeS/sirohaem_BS"/>
</dbReference>
<dbReference type="PANTHER" id="PTHR32439">
    <property type="entry name" value="FERREDOXIN--NITRITE REDUCTASE, CHLOROPLASTIC"/>
    <property type="match status" value="1"/>
</dbReference>
<dbReference type="PANTHER" id="PTHR32439:SF0">
    <property type="entry name" value="FERREDOXIN--NITRITE REDUCTASE, CHLOROPLASTIC"/>
    <property type="match status" value="1"/>
</dbReference>
<dbReference type="Pfam" id="PF01077">
    <property type="entry name" value="NIR_SIR"/>
    <property type="match status" value="2"/>
</dbReference>
<dbReference type="Pfam" id="PF03460">
    <property type="entry name" value="NIR_SIR_ferr"/>
    <property type="match status" value="2"/>
</dbReference>
<dbReference type="PRINTS" id="PR00397">
    <property type="entry name" value="SIROHAEM"/>
</dbReference>
<dbReference type="SUPFAM" id="SSF56014">
    <property type="entry name" value="Nitrite and sulphite reductase 4Fe-4S domain-like"/>
    <property type="match status" value="2"/>
</dbReference>
<dbReference type="SUPFAM" id="SSF55124">
    <property type="entry name" value="Nitrite/Sulfite reductase N-terminal domain-like"/>
    <property type="match status" value="2"/>
</dbReference>
<dbReference type="PROSITE" id="PS00365">
    <property type="entry name" value="NIR_SIR"/>
    <property type="match status" value="1"/>
</dbReference>